<protein>
    <recommendedName>
        <fullName>Uncharacterized protein BB_0266</fullName>
    </recommendedName>
    <alternativeName>
        <fullName>ORF38</fullName>
    </alternativeName>
</protein>
<sequence>MDTFEVFKMSVVGSFKARQFLSESEKHKRLKINQNARFRFLRDCHTDSEVGNVCVVNKVGDNYLLSFPVKKNKNEEKVMLSLYPDKFEDPKIGKNVNIKR</sequence>
<proteinExistence type="predicted"/>
<feature type="chain" id="PRO_0000174388" description="Uncharacterized protein BB_0266">
    <location>
        <begin position="1"/>
        <end position="100"/>
    </location>
</feature>
<keyword id="KW-1185">Reference proteome</keyword>
<reference key="1">
    <citation type="journal article" date="1997" name="Nature">
        <title>Genomic sequence of a Lyme disease spirochaete, Borrelia burgdorferi.</title>
        <authorList>
            <person name="Fraser C.M."/>
            <person name="Casjens S."/>
            <person name="Huang W.M."/>
            <person name="Sutton G.G."/>
            <person name="Clayton R.A."/>
            <person name="Lathigra R."/>
            <person name="White O."/>
            <person name="Ketchum K.A."/>
            <person name="Dodson R.J."/>
            <person name="Hickey E.K."/>
            <person name="Gwinn M.L."/>
            <person name="Dougherty B.A."/>
            <person name="Tomb J.-F."/>
            <person name="Fleischmann R.D."/>
            <person name="Richardson D.L."/>
            <person name="Peterson J.D."/>
            <person name="Kerlavage A.R."/>
            <person name="Quackenbush J."/>
            <person name="Salzberg S.L."/>
            <person name="Hanson M."/>
            <person name="van Vugt R."/>
            <person name="Palmer N."/>
            <person name="Adams M.D."/>
            <person name="Gocayne J.D."/>
            <person name="Weidman J.F."/>
            <person name="Utterback T.R."/>
            <person name="Watthey L."/>
            <person name="McDonald L.A."/>
            <person name="Artiach P."/>
            <person name="Bowman C."/>
            <person name="Garland S.A."/>
            <person name="Fujii C."/>
            <person name="Cotton M.D."/>
            <person name="Horst K."/>
            <person name="Roberts K.M."/>
            <person name="Hatch B."/>
            <person name="Smith H.O."/>
            <person name="Venter J.C."/>
        </authorList>
    </citation>
    <scope>NUCLEOTIDE SEQUENCE [LARGE SCALE GENOMIC DNA]</scope>
    <source>
        <strain>ATCC 35210 / DSM 4680 / CIP 102532 / B31</strain>
    </source>
</reference>
<reference key="2">
    <citation type="submission" date="1995-12" db="EMBL/GenBank/DDBJ databases">
        <authorList>
            <person name="Dunn J.J."/>
            <person name="Butler-Loffredo L."/>
            <person name="Kieleczawa J."/>
            <person name="Medalle J."/>
            <person name="Luft B.J."/>
        </authorList>
    </citation>
    <scope>NUCLEOTIDE SEQUENCE [GENOMIC DNA] OF 1-89</scope>
    <source>
        <strain>ATCC 35210 / DSM 4680 / CIP 102532 / B31</strain>
    </source>
</reference>
<organism>
    <name type="scientific">Borreliella burgdorferi (strain ATCC 35210 / DSM 4680 / CIP 102532 / B31)</name>
    <name type="common">Borrelia burgdorferi</name>
    <dbReference type="NCBI Taxonomy" id="224326"/>
    <lineage>
        <taxon>Bacteria</taxon>
        <taxon>Pseudomonadati</taxon>
        <taxon>Spirochaetota</taxon>
        <taxon>Spirochaetia</taxon>
        <taxon>Spirochaetales</taxon>
        <taxon>Borreliaceae</taxon>
        <taxon>Borreliella</taxon>
    </lineage>
</organism>
<name>Y266_BORBU</name>
<gene>
    <name type="ordered locus">BB_0266</name>
</gene>
<accession>Q44754</accession>
<dbReference type="EMBL" id="AE000783">
    <property type="protein sequence ID" value="AAC66682.2"/>
    <property type="molecule type" value="Genomic_DNA"/>
</dbReference>
<dbReference type="EMBL" id="U43739">
    <property type="protein sequence ID" value="AAA85590.1"/>
    <property type="molecule type" value="Genomic_DNA"/>
</dbReference>
<dbReference type="PIR" id="B70133">
    <property type="entry name" value="B70133"/>
</dbReference>
<dbReference type="RefSeq" id="NP_212400.2">
    <property type="nucleotide sequence ID" value="NC_001318.1"/>
</dbReference>
<dbReference type="RefSeq" id="WP_002657707.1">
    <property type="nucleotide sequence ID" value="NC_001318.1"/>
</dbReference>
<dbReference type="STRING" id="224326.BB_0266"/>
<dbReference type="PaxDb" id="224326-BB_0266"/>
<dbReference type="EnsemblBacteria" id="AAC66682">
    <property type="protein sequence ID" value="AAC66682"/>
    <property type="gene ID" value="BB_0266"/>
</dbReference>
<dbReference type="KEGG" id="bbu:BB_0266"/>
<dbReference type="PATRIC" id="fig|224326.49.peg.665"/>
<dbReference type="HOGENOM" id="CLU_2300296_0_0_12"/>
<dbReference type="OrthoDB" id="350715at2"/>
<dbReference type="Proteomes" id="UP000001807">
    <property type="component" value="Chromosome"/>
</dbReference>